<gene>
    <name evidence="1" type="primary">queA</name>
    <name type="ordered locus">Anae109_1319</name>
</gene>
<feature type="chain" id="PRO_1000015176" description="S-adenosylmethionine:tRNA ribosyltransferase-isomerase">
    <location>
        <begin position="1"/>
        <end position="345"/>
    </location>
</feature>
<keyword id="KW-0963">Cytoplasm</keyword>
<keyword id="KW-0671">Queuosine biosynthesis</keyword>
<keyword id="KW-1185">Reference proteome</keyword>
<keyword id="KW-0949">S-adenosyl-L-methionine</keyword>
<keyword id="KW-0808">Transferase</keyword>
<protein>
    <recommendedName>
        <fullName evidence="1">S-adenosylmethionine:tRNA ribosyltransferase-isomerase</fullName>
        <ecNumber evidence="1">2.4.99.17</ecNumber>
    </recommendedName>
    <alternativeName>
        <fullName evidence="1">Queuosine biosynthesis protein QueA</fullName>
    </alternativeName>
</protein>
<reference key="1">
    <citation type="journal article" date="2015" name="Genome Announc.">
        <title>Complete genome sequence of Anaeromyxobacter sp. Fw109-5, an anaerobic, metal-reducing bacterium isolated from a contaminated subsurface environment.</title>
        <authorList>
            <person name="Hwang C."/>
            <person name="Copeland A."/>
            <person name="Lucas S."/>
            <person name="Lapidus A."/>
            <person name="Barry K."/>
            <person name="Glavina Del Rio T."/>
            <person name="Dalin E."/>
            <person name="Tice H."/>
            <person name="Pitluck S."/>
            <person name="Sims D."/>
            <person name="Brettin T."/>
            <person name="Bruce D.C."/>
            <person name="Detter J.C."/>
            <person name="Han C.S."/>
            <person name="Schmutz J."/>
            <person name="Larimer F.W."/>
            <person name="Land M.L."/>
            <person name="Hauser L.J."/>
            <person name="Kyrpides N."/>
            <person name="Lykidis A."/>
            <person name="Richardson P."/>
            <person name="Belieav A."/>
            <person name="Sanford R.A."/>
            <person name="Loeffler F.E."/>
            <person name="Fields M.W."/>
        </authorList>
    </citation>
    <scope>NUCLEOTIDE SEQUENCE [LARGE SCALE GENOMIC DNA]</scope>
    <source>
        <strain>Fw109-5</strain>
    </source>
</reference>
<organism>
    <name type="scientific">Anaeromyxobacter sp. (strain Fw109-5)</name>
    <dbReference type="NCBI Taxonomy" id="404589"/>
    <lineage>
        <taxon>Bacteria</taxon>
        <taxon>Pseudomonadati</taxon>
        <taxon>Myxococcota</taxon>
        <taxon>Myxococcia</taxon>
        <taxon>Myxococcales</taxon>
        <taxon>Cystobacterineae</taxon>
        <taxon>Anaeromyxobacteraceae</taxon>
        <taxon>Anaeromyxobacter</taxon>
    </lineage>
</organism>
<accession>A7H9Y1</accession>
<dbReference type="EC" id="2.4.99.17" evidence="1"/>
<dbReference type="EMBL" id="CP000769">
    <property type="protein sequence ID" value="ABS25527.1"/>
    <property type="molecule type" value="Genomic_DNA"/>
</dbReference>
<dbReference type="RefSeq" id="WP_011985633.1">
    <property type="nucleotide sequence ID" value="NC_009675.1"/>
</dbReference>
<dbReference type="SMR" id="A7H9Y1"/>
<dbReference type="STRING" id="404589.Anae109_1319"/>
<dbReference type="KEGG" id="afw:Anae109_1319"/>
<dbReference type="eggNOG" id="COG0809">
    <property type="taxonomic scope" value="Bacteria"/>
</dbReference>
<dbReference type="HOGENOM" id="CLU_039110_1_0_7"/>
<dbReference type="OrthoDB" id="9805933at2"/>
<dbReference type="UniPathway" id="UPA00392"/>
<dbReference type="Proteomes" id="UP000006382">
    <property type="component" value="Chromosome"/>
</dbReference>
<dbReference type="GO" id="GO:0005737">
    <property type="term" value="C:cytoplasm"/>
    <property type="evidence" value="ECO:0007669"/>
    <property type="project" value="UniProtKB-SubCell"/>
</dbReference>
<dbReference type="GO" id="GO:0051075">
    <property type="term" value="F:S-adenosylmethionine:tRNA ribosyltransferase-isomerase activity"/>
    <property type="evidence" value="ECO:0007669"/>
    <property type="project" value="UniProtKB-EC"/>
</dbReference>
<dbReference type="GO" id="GO:0008616">
    <property type="term" value="P:queuosine biosynthetic process"/>
    <property type="evidence" value="ECO:0007669"/>
    <property type="project" value="UniProtKB-UniRule"/>
</dbReference>
<dbReference type="GO" id="GO:0002099">
    <property type="term" value="P:tRNA wobble guanine modification"/>
    <property type="evidence" value="ECO:0007669"/>
    <property type="project" value="TreeGrafter"/>
</dbReference>
<dbReference type="FunFam" id="3.40.1780.10:FF:000001">
    <property type="entry name" value="S-adenosylmethionine:tRNA ribosyltransferase-isomerase"/>
    <property type="match status" value="1"/>
</dbReference>
<dbReference type="Gene3D" id="2.40.10.240">
    <property type="entry name" value="QueA-like"/>
    <property type="match status" value="1"/>
</dbReference>
<dbReference type="Gene3D" id="3.40.1780.10">
    <property type="entry name" value="QueA-like"/>
    <property type="match status" value="1"/>
</dbReference>
<dbReference type="HAMAP" id="MF_00113">
    <property type="entry name" value="QueA"/>
    <property type="match status" value="1"/>
</dbReference>
<dbReference type="InterPro" id="IPR003699">
    <property type="entry name" value="QueA"/>
</dbReference>
<dbReference type="InterPro" id="IPR042118">
    <property type="entry name" value="QueA_dom1"/>
</dbReference>
<dbReference type="InterPro" id="IPR042119">
    <property type="entry name" value="QueA_dom2"/>
</dbReference>
<dbReference type="InterPro" id="IPR036100">
    <property type="entry name" value="QueA_sf"/>
</dbReference>
<dbReference type="NCBIfam" id="NF001140">
    <property type="entry name" value="PRK00147.1"/>
    <property type="match status" value="1"/>
</dbReference>
<dbReference type="NCBIfam" id="TIGR00113">
    <property type="entry name" value="queA"/>
    <property type="match status" value="1"/>
</dbReference>
<dbReference type="PANTHER" id="PTHR30307">
    <property type="entry name" value="S-ADENOSYLMETHIONINE:TRNA RIBOSYLTRANSFERASE-ISOMERASE"/>
    <property type="match status" value="1"/>
</dbReference>
<dbReference type="PANTHER" id="PTHR30307:SF0">
    <property type="entry name" value="S-ADENOSYLMETHIONINE:TRNA RIBOSYLTRANSFERASE-ISOMERASE"/>
    <property type="match status" value="1"/>
</dbReference>
<dbReference type="Pfam" id="PF02547">
    <property type="entry name" value="Queuosine_synth"/>
    <property type="match status" value="1"/>
</dbReference>
<dbReference type="SUPFAM" id="SSF111337">
    <property type="entry name" value="QueA-like"/>
    <property type="match status" value="1"/>
</dbReference>
<evidence type="ECO:0000255" key="1">
    <source>
        <dbReference type="HAMAP-Rule" id="MF_00113"/>
    </source>
</evidence>
<name>QUEA_ANADF</name>
<comment type="function">
    <text evidence="1">Transfers and isomerizes the ribose moiety from AdoMet to the 7-aminomethyl group of 7-deazaguanine (preQ1-tRNA) to give epoxyqueuosine (oQ-tRNA).</text>
</comment>
<comment type="catalytic activity">
    <reaction evidence="1">
        <text>7-aminomethyl-7-carbaguanosine(34) in tRNA + S-adenosyl-L-methionine = epoxyqueuosine(34) in tRNA + adenine + L-methionine + 2 H(+)</text>
        <dbReference type="Rhea" id="RHEA:32155"/>
        <dbReference type="Rhea" id="RHEA-COMP:10342"/>
        <dbReference type="Rhea" id="RHEA-COMP:18582"/>
        <dbReference type="ChEBI" id="CHEBI:15378"/>
        <dbReference type="ChEBI" id="CHEBI:16708"/>
        <dbReference type="ChEBI" id="CHEBI:57844"/>
        <dbReference type="ChEBI" id="CHEBI:59789"/>
        <dbReference type="ChEBI" id="CHEBI:82833"/>
        <dbReference type="ChEBI" id="CHEBI:194443"/>
        <dbReference type="EC" id="2.4.99.17"/>
    </reaction>
</comment>
<comment type="pathway">
    <text evidence="1">tRNA modification; tRNA-queuosine biosynthesis.</text>
</comment>
<comment type="subunit">
    <text evidence="1">Monomer.</text>
</comment>
<comment type="subcellular location">
    <subcellularLocation>
        <location evidence="1">Cytoplasm</location>
    </subcellularLocation>
</comment>
<comment type="similarity">
    <text evidence="1">Belongs to the QueA family.</text>
</comment>
<proteinExistence type="inferred from homology"/>
<sequence length="345" mass="37154">MRLSDFDYELPEELVAQEPVTPRDASRLLVLPREGAAEHRAFTDLPDLLAPGDLLVFNDTKVIPARLVGTKPTGGKVELLLCEPLGGGLGSRWRAMGQASKPIREGTTLLFEGLEARVEASEGEGFYVVTLDREGEALEAALARAGRIPLPPYIRRAPSDVDRERYQTIWARAPGSAAAPTAGLHFTEAILARLAARGVERTAVTLHVGPGTFLPVRGDSVEGHRMHAEQYEVRPEAAAAIAACRARGSRVVAVGTTSVRTLESAWRGGAVAAGAGRTALFVRPGHAFRAVDALVTNFHLPRSTLLMLVCAFGGTHRVLAAYRDAVARRYRFFSYGDAMLLARAD</sequence>